<name>RL192_ARATH</name>
<protein>
    <recommendedName>
        <fullName evidence="2">Large ribosomal subunit protein eL19z</fullName>
    </recommendedName>
    <alternativeName>
        <fullName>60S ribosomal protein L19-2</fullName>
    </alternativeName>
</protein>
<dbReference type="EMBL" id="AB022217">
    <property type="protein sequence ID" value="BAB02770.1"/>
    <property type="molecule type" value="Genomic_DNA"/>
</dbReference>
<dbReference type="EMBL" id="CP002686">
    <property type="protein sequence ID" value="AEE75864.1"/>
    <property type="molecule type" value="Genomic_DNA"/>
</dbReference>
<dbReference type="EMBL" id="AY045610">
    <property type="protein sequence ID" value="AAK73968.1"/>
    <property type="molecule type" value="mRNA"/>
</dbReference>
<dbReference type="EMBL" id="AY090335">
    <property type="protein sequence ID" value="AAL90996.1"/>
    <property type="molecule type" value="mRNA"/>
</dbReference>
<dbReference type="RefSeq" id="NP_188300.1">
    <property type="nucleotide sequence ID" value="NM_112551.4"/>
</dbReference>
<dbReference type="SMR" id="Q9LUQ6"/>
<dbReference type="BioGRID" id="6265">
    <property type="interactions" value="127"/>
</dbReference>
<dbReference type="FunCoup" id="Q9LUQ6">
    <property type="interactions" value="3750"/>
</dbReference>
<dbReference type="STRING" id="3702.Q9LUQ6"/>
<dbReference type="iPTMnet" id="Q9LUQ6"/>
<dbReference type="PaxDb" id="3702-AT3G16780.1"/>
<dbReference type="ProteomicsDB" id="236267"/>
<dbReference type="EnsemblPlants" id="AT3G16780.1">
    <property type="protein sequence ID" value="AT3G16780.1"/>
    <property type="gene ID" value="AT3G16780"/>
</dbReference>
<dbReference type="GeneID" id="820931"/>
<dbReference type="Gramene" id="AT3G16780.1">
    <property type="protein sequence ID" value="AT3G16780.1"/>
    <property type="gene ID" value="AT3G16780"/>
</dbReference>
<dbReference type="KEGG" id="ath:AT3G16780"/>
<dbReference type="Araport" id="AT3G16780"/>
<dbReference type="TAIR" id="AT3G16780">
    <property type="gene designation" value="RPL19B"/>
</dbReference>
<dbReference type="eggNOG" id="KOG1696">
    <property type="taxonomic scope" value="Eukaryota"/>
</dbReference>
<dbReference type="HOGENOM" id="CLU_083919_0_1_1"/>
<dbReference type="InParanoid" id="Q9LUQ6"/>
<dbReference type="OMA" id="SIHKMKA"/>
<dbReference type="PhylomeDB" id="Q9LUQ6"/>
<dbReference type="PRO" id="PR:Q9LUQ6"/>
<dbReference type="Proteomes" id="UP000006548">
    <property type="component" value="Chromosome 3"/>
</dbReference>
<dbReference type="ExpressionAtlas" id="Q9LUQ6">
    <property type="expression patterns" value="baseline and differential"/>
</dbReference>
<dbReference type="GO" id="GO:0005829">
    <property type="term" value="C:cytosol"/>
    <property type="evidence" value="ECO:0007005"/>
    <property type="project" value="TAIR"/>
</dbReference>
<dbReference type="GO" id="GO:0022625">
    <property type="term" value="C:cytosolic large ribosomal subunit"/>
    <property type="evidence" value="ECO:0007005"/>
    <property type="project" value="TAIR"/>
</dbReference>
<dbReference type="GO" id="GO:0003729">
    <property type="term" value="F:mRNA binding"/>
    <property type="evidence" value="ECO:0000314"/>
    <property type="project" value="TAIR"/>
</dbReference>
<dbReference type="GO" id="GO:0003735">
    <property type="term" value="F:structural constituent of ribosome"/>
    <property type="evidence" value="ECO:0000314"/>
    <property type="project" value="CAFA"/>
</dbReference>
<dbReference type="GO" id="GO:0006412">
    <property type="term" value="P:translation"/>
    <property type="evidence" value="ECO:0007669"/>
    <property type="project" value="InterPro"/>
</dbReference>
<dbReference type="CDD" id="cd01417">
    <property type="entry name" value="Ribosomal_L19e_E"/>
    <property type="match status" value="1"/>
</dbReference>
<dbReference type="FunFam" id="1.10.1200.240:FF:000001">
    <property type="entry name" value="Ribosomal protein L19"/>
    <property type="match status" value="1"/>
</dbReference>
<dbReference type="FunFam" id="1.10.1650.10:FF:000001">
    <property type="entry name" value="Ribosomal protein L19"/>
    <property type="match status" value="1"/>
</dbReference>
<dbReference type="Gene3D" id="1.10.1200.240">
    <property type="match status" value="1"/>
</dbReference>
<dbReference type="Gene3D" id="1.10.1650.10">
    <property type="match status" value="1"/>
</dbReference>
<dbReference type="HAMAP" id="MF_01475">
    <property type="entry name" value="Ribosomal_eL19"/>
    <property type="match status" value="1"/>
</dbReference>
<dbReference type="InterPro" id="IPR035970">
    <property type="entry name" value="60S_ribosomal_eL19_sf"/>
</dbReference>
<dbReference type="InterPro" id="IPR039547">
    <property type="entry name" value="Ribosomal_eL19"/>
</dbReference>
<dbReference type="InterPro" id="IPR023638">
    <property type="entry name" value="Ribosomal_eL19_CS"/>
</dbReference>
<dbReference type="InterPro" id="IPR000196">
    <property type="entry name" value="Ribosomal_eL19_dom"/>
</dbReference>
<dbReference type="InterPro" id="IPR015972">
    <property type="entry name" value="Ribosomal_eL19_dom1"/>
</dbReference>
<dbReference type="InterPro" id="IPR033935">
    <property type="entry name" value="Ribosomal_eL19_euk"/>
</dbReference>
<dbReference type="NCBIfam" id="NF006343">
    <property type="entry name" value="PRK08570.1"/>
    <property type="match status" value="1"/>
</dbReference>
<dbReference type="PANTHER" id="PTHR10722">
    <property type="entry name" value="60S RIBOSOMAL PROTEIN L19"/>
    <property type="match status" value="1"/>
</dbReference>
<dbReference type="Pfam" id="PF01280">
    <property type="entry name" value="Ribosomal_L19e"/>
    <property type="match status" value="1"/>
</dbReference>
<dbReference type="Pfam" id="PF25476">
    <property type="entry name" value="Ribosomal_L19e_C"/>
    <property type="match status" value="1"/>
</dbReference>
<dbReference type="SMART" id="SM01416">
    <property type="entry name" value="Ribosomal_L19e"/>
    <property type="match status" value="1"/>
</dbReference>
<dbReference type="SUPFAM" id="SSF48140">
    <property type="entry name" value="Ribosomal protein L19 (L19e)"/>
    <property type="match status" value="1"/>
</dbReference>
<dbReference type="PROSITE" id="PS00526">
    <property type="entry name" value="RIBOSOMAL_L19E"/>
    <property type="match status" value="1"/>
</dbReference>
<reference key="1">
    <citation type="journal article" date="2000" name="DNA Res.">
        <title>Structural analysis of Arabidopsis thaliana chromosome 3. I. Sequence features of the regions of 4,504,864 bp covered by sixty P1 and TAC clones.</title>
        <authorList>
            <person name="Sato S."/>
            <person name="Nakamura Y."/>
            <person name="Kaneko T."/>
            <person name="Katoh T."/>
            <person name="Asamizu E."/>
            <person name="Tabata S."/>
        </authorList>
    </citation>
    <scope>NUCLEOTIDE SEQUENCE [LARGE SCALE GENOMIC DNA]</scope>
    <source>
        <strain>cv. Columbia</strain>
    </source>
</reference>
<reference key="2">
    <citation type="journal article" date="2017" name="Plant J.">
        <title>Araport11: a complete reannotation of the Arabidopsis thaliana reference genome.</title>
        <authorList>
            <person name="Cheng C.Y."/>
            <person name="Krishnakumar V."/>
            <person name="Chan A.P."/>
            <person name="Thibaud-Nissen F."/>
            <person name="Schobel S."/>
            <person name="Town C.D."/>
        </authorList>
    </citation>
    <scope>GENOME REANNOTATION</scope>
    <source>
        <strain>cv. Columbia</strain>
    </source>
</reference>
<reference key="3">
    <citation type="journal article" date="2003" name="Science">
        <title>Empirical analysis of transcriptional activity in the Arabidopsis genome.</title>
        <authorList>
            <person name="Yamada K."/>
            <person name="Lim J."/>
            <person name="Dale J.M."/>
            <person name="Chen H."/>
            <person name="Shinn P."/>
            <person name="Palm C.J."/>
            <person name="Southwick A.M."/>
            <person name="Wu H.C."/>
            <person name="Kim C.J."/>
            <person name="Nguyen M."/>
            <person name="Pham P.K."/>
            <person name="Cheuk R.F."/>
            <person name="Karlin-Newmann G."/>
            <person name="Liu S.X."/>
            <person name="Lam B."/>
            <person name="Sakano H."/>
            <person name="Wu T."/>
            <person name="Yu G."/>
            <person name="Miranda M."/>
            <person name="Quach H.L."/>
            <person name="Tripp M."/>
            <person name="Chang C.H."/>
            <person name="Lee J.M."/>
            <person name="Toriumi M.J."/>
            <person name="Chan M.M."/>
            <person name="Tang C.C."/>
            <person name="Onodera C.S."/>
            <person name="Deng J.M."/>
            <person name="Akiyama K."/>
            <person name="Ansari Y."/>
            <person name="Arakawa T."/>
            <person name="Banh J."/>
            <person name="Banno F."/>
            <person name="Bowser L."/>
            <person name="Brooks S.Y."/>
            <person name="Carninci P."/>
            <person name="Chao Q."/>
            <person name="Choy N."/>
            <person name="Enju A."/>
            <person name="Goldsmith A.D."/>
            <person name="Gurjal M."/>
            <person name="Hansen N.F."/>
            <person name="Hayashizaki Y."/>
            <person name="Johnson-Hopson C."/>
            <person name="Hsuan V.W."/>
            <person name="Iida K."/>
            <person name="Karnes M."/>
            <person name="Khan S."/>
            <person name="Koesema E."/>
            <person name="Ishida J."/>
            <person name="Jiang P.X."/>
            <person name="Jones T."/>
            <person name="Kawai J."/>
            <person name="Kamiya A."/>
            <person name="Meyers C."/>
            <person name="Nakajima M."/>
            <person name="Narusaka M."/>
            <person name="Seki M."/>
            <person name="Sakurai T."/>
            <person name="Satou M."/>
            <person name="Tamse R."/>
            <person name="Vaysberg M."/>
            <person name="Wallender E.K."/>
            <person name="Wong C."/>
            <person name="Yamamura Y."/>
            <person name="Yuan S."/>
            <person name="Shinozaki K."/>
            <person name="Davis R.W."/>
            <person name="Theologis A."/>
            <person name="Ecker J.R."/>
        </authorList>
    </citation>
    <scope>NUCLEOTIDE SEQUENCE [LARGE SCALE MRNA]</scope>
    <source>
        <strain>cv. Columbia</strain>
    </source>
</reference>
<reference key="4">
    <citation type="journal article" date="2001" name="Plant Physiol.">
        <title>The organization of cytoplasmic ribosomal protein genes in the Arabidopsis genome.</title>
        <authorList>
            <person name="Barakat A."/>
            <person name="Szick-Miranda K."/>
            <person name="Chang I.-F."/>
            <person name="Guyot R."/>
            <person name="Blanc G."/>
            <person name="Cooke R."/>
            <person name="Delseny M."/>
            <person name="Bailey-Serres J."/>
        </authorList>
    </citation>
    <scope>GENE FAMILY ORGANIZATION</scope>
    <scope>NOMENCLATURE</scope>
</reference>
<reference key="5">
    <citation type="journal article" date="2023" name="Plant Cell">
        <title>An updated nomenclature for plant ribosomal protein genes.</title>
        <authorList>
            <person name="Scarpin M.R."/>
            <person name="Busche M."/>
            <person name="Martinez R.E."/>
            <person name="Harper L.C."/>
            <person name="Reiser L."/>
            <person name="Szakonyi D."/>
            <person name="Merchante C."/>
            <person name="Lan T."/>
            <person name="Xiong W."/>
            <person name="Mo B."/>
            <person name="Tang G."/>
            <person name="Chen X."/>
            <person name="Bailey-Serres J."/>
            <person name="Browning K.S."/>
            <person name="Brunkard J.O."/>
        </authorList>
    </citation>
    <scope>NOMENCLATURE</scope>
</reference>
<gene>
    <name type="primary">RPL19B</name>
    <name type="ordered locus">At3g16780</name>
    <name type="ORF">MGL6.25</name>
</gene>
<accession>Q9LUQ6</accession>
<proteinExistence type="evidence at transcript level"/>
<comment type="similarity">
    <text evidence="3">Belongs to the eukaryotic ribosomal protein eL19 family.</text>
</comment>
<feature type="chain" id="PRO_0000131180" description="Large ribosomal subunit protein eL19z">
    <location>
        <begin position="1"/>
        <end position="209"/>
    </location>
</feature>
<feature type="region of interest" description="Disordered" evidence="1">
    <location>
        <begin position="60"/>
        <end position="84"/>
    </location>
</feature>
<feature type="region of interest" description="Disordered" evidence="1">
    <location>
        <begin position="161"/>
        <end position="209"/>
    </location>
</feature>
<feature type="compositionally biased region" description="Basic residues" evidence="1">
    <location>
        <begin position="71"/>
        <end position="83"/>
    </location>
</feature>
<feature type="compositionally biased region" description="Basic and acidic residues" evidence="1">
    <location>
        <begin position="161"/>
        <end position="181"/>
    </location>
</feature>
<sequence length="209" mass="24330">MVSLKIQKRLAASVMKCGKGKVWLDPNESGDISMANSRQNIRKLVKDGFIIRKPTKIHSRSRARALNEAKRKGRHSGYGKRKGTREARLPTKILWMRRMRVLRRFLSKYRESKKIDRHMYHDMYMKVKGNVFKNKRVLMESIHKMKAEKAREKTLADQFEAKRIKNKASRERKFARREERLAQGPGGGETTTPAGAPQQPEVTKKKSKK</sequence>
<evidence type="ECO:0000256" key="1">
    <source>
        <dbReference type="SAM" id="MobiDB-lite"/>
    </source>
</evidence>
<evidence type="ECO:0000303" key="2">
    <source>
    </source>
</evidence>
<evidence type="ECO:0000305" key="3"/>
<keyword id="KW-1185">Reference proteome</keyword>
<keyword id="KW-0687">Ribonucleoprotein</keyword>
<keyword id="KW-0689">Ribosomal protein</keyword>
<organism>
    <name type="scientific">Arabidopsis thaliana</name>
    <name type="common">Mouse-ear cress</name>
    <dbReference type="NCBI Taxonomy" id="3702"/>
    <lineage>
        <taxon>Eukaryota</taxon>
        <taxon>Viridiplantae</taxon>
        <taxon>Streptophyta</taxon>
        <taxon>Embryophyta</taxon>
        <taxon>Tracheophyta</taxon>
        <taxon>Spermatophyta</taxon>
        <taxon>Magnoliopsida</taxon>
        <taxon>eudicotyledons</taxon>
        <taxon>Gunneridae</taxon>
        <taxon>Pentapetalae</taxon>
        <taxon>rosids</taxon>
        <taxon>malvids</taxon>
        <taxon>Brassicales</taxon>
        <taxon>Brassicaceae</taxon>
        <taxon>Camelineae</taxon>
        <taxon>Arabidopsis</taxon>
    </lineage>
</organism>